<reference key="1">
    <citation type="submission" date="2009-02" db="EMBL/GenBank/DDBJ databases">
        <title>The genome sequence of Enterococcus gallinarum strain EG2 (1,134,897).</title>
        <authorList>
            <consortium name="The Broad Institute Genome Sequencing Platform"/>
            <person name="Feldgarden M."/>
            <person name="Young S.K."/>
            <person name="Kodira C.D."/>
            <person name="Zeng Q."/>
            <person name="Koehrsen M."/>
            <person name="Alvarado L."/>
            <person name="Berlin A."/>
            <person name="Borenstein D."/>
            <person name="Chen Z."/>
            <person name="Engels R."/>
            <person name="Freedman E."/>
            <person name="Gellesch M."/>
            <person name="Goldberg J."/>
            <person name="Griggs A."/>
            <person name="Gujja S."/>
            <person name="Heiman D."/>
            <person name="Hepburn T."/>
            <person name="Howarth C."/>
            <person name="Jen D."/>
            <person name="Larson L."/>
            <person name="Lewis B."/>
            <person name="Mehta T."/>
            <person name="Park D."/>
            <person name="Pearson M."/>
            <person name="Roberts A."/>
            <person name="Saif S."/>
            <person name="Shea T."/>
            <person name="Shenoy N."/>
            <person name="Sisk P."/>
            <person name="Stolte C."/>
            <person name="Sykes S."/>
            <person name="Walk T."/>
            <person name="White J."/>
            <person name="Yandava C."/>
            <person name="Gilmore M."/>
            <person name="Manson J."/>
            <person name="Palmer K."/>
            <person name="Carniol K."/>
            <person name="Lander E."/>
            <person name="Nusbaum C."/>
            <person name="Galagan J."/>
            <person name="Birren B."/>
        </authorList>
    </citation>
    <scope>NUCLEOTIDE SEQUENCE [LARGE SCALE GENOMIC DNA]</scope>
    <source>
        <strain>EG2</strain>
    </source>
</reference>
<reference key="2">
    <citation type="journal article" date="2014" name="Biochemistry">
        <title>Discovery of function in the enolase superfamily: D-mannonate and D-gluconate dehydratases in the D-mannonate dehydratase subgroup.</title>
        <authorList>
            <person name="Wichelecki D.J."/>
            <person name="Balthazor B.M."/>
            <person name="Chau A.C."/>
            <person name="Vetting M.W."/>
            <person name="Fedorov A.A."/>
            <person name="Fedorov E.V."/>
            <person name="Lukk T."/>
            <person name="Patskovsky Y.V."/>
            <person name="Stead M.B."/>
            <person name="Hillerich B.S."/>
            <person name="Seidel R.D."/>
            <person name="Almo S.C."/>
            <person name="Gerlt J.A."/>
        </authorList>
    </citation>
    <scope>FUNCTION</scope>
    <scope>LACK OF D-MANNONATE DEHYDRATASE ACTIVITY</scope>
    <source>
        <strain>EG2</strain>
    </source>
</reference>
<feature type="chain" id="PRO_0000429909" description="D-galactonate dehydratase family member EGBG_02030">
    <location>
        <begin position="1"/>
        <end position="402"/>
    </location>
</feature>
<feature type="binding site" evidence="1">
    <location>
        <position position="207"/>
    </location>
    <ligand>
        <name>Mg(2+)</name>
        <dbReference type="ChEBI" id="CHEBI:18420"/>
    </ligand>
</feature>
<feature type="binding site" evidence="1">
    <location>
        <position position="209"/>
    </location>
    <ligand>
        <name>D-arabinonate</name>
        <dbReference type="ChEBI" id="CHEBI:16157"/>
    </ligand>
</feature>
<feature type="binding site" evidence="1">
    <location>
        <position position="233"/>
    </location>
    <ligand>
        <name>Mg(2+)</name>
        <dbReference type="ChEBI" id="CHEBI:18420"/>
    </ligand>
</feature>
<feature type="binding site" evidence="1">
    <location>
        <position position="259"/>
    </location>
    <ligand>
        <name>D-arabinonate</name>
        <dbReference type="ChEBI" id="CHEBI:16157"/>
    </ligand>
</feature>
<feature type="binding site" evidence="1">
    <location>
        <position position="259"/>
    </location>
    <ligand>
        <name>Mg(2+)</name>
        <dbReference type="ChEBI" id="CHEBI:18420"/>
    </ligand>
</feature>
<feature type="binding site" evidence="1">
    <location>
        <position position="280"/>
    </location>
    <ligand>
        <name>D-arabinonate</name>
        <dbReference type="ChEBI" id="CHEBI:16157"/>
    </ligand>
</feature>
<feature type="binding site" evidence="1">
    <location>
        <position position="309"/>
    </location>
    <ligand>
        <name>D-arabinonate</name>
        <dbReference type="ChEBI" id="CHEBI:16157"/>
    </ligand>
</feature>
<feature type="binding site" evidence="1">
    <location>
        <position position="336"/>
    </location>
    <ligand>
        <name>D-arabinonate</name>
        <dbReference type="ChEBI" id="CHEBI:16157"/>
    </ligand>
</feature>
<gene>
    <name type="ORF">EGBG_02030</name>
</gene>
<organism>
    <name type="scientific">Enterococcus gallinarum (strain EG2)</name>
    <dbReference type="NCBI Taxonomy" id="565653"/>
    <lineage>
        <taxon>Bacteria</taxon>
        <taxon>Bacillati</taxon>
        <taxon>Bacillota</taxon>
        <taxon>Bacilli</taxon>
        <taxon>Lactobacillales</taxon>
        <taxon>Enterococcaceae</taxon>
        <taxon>Enterococcus</taxon>
    </lineage>
</organism>
<proteinExistence type="inferred from homology"/>
<evidence type="ECO:0000250" key="1"/>
<evidence type="ECO:0000269" key="2">
    <source>
    </source>
</evidence>
<evidence type="ECO:0000305" key="3"/>
<keyword id="KW-0460">Magnesium</keyword>
<keyword id="KW-0479">Metal-binding</keyword>
<protein>
    <recommendedName>
        <fullName>D-galactonate dehydratase family member EGBG_02030</fullName>
    </recommendedName>
</protein>
<dbReference type="EMBL" id="GG670289">
    <property type="protein sequence ID" value="EEV33428.1"/>
    <property type="molecule type" value="Genomic_DNA"/>
</dbReference>
<dbReference type="RefSeq" id="WP_003127878.1">
    <property type="nucleotide sequence ID" value="NZ_GG670289.1"/>
</dbReference>
<dbReference type="SMR" id="C9A1P5"/>
<dbReference type="eggNOG" id="COG4948">
    <property type="taxonomic scope" value="Bacteria"/>
</dbReference>
<dbReference type="HOGENOM" id="CLU_030273_6_1_9"/>
<dbReference type="GO" id="GO:0000287">
    <property type="term" value="F:magnesium ion binding"/>
    <property type="evidence" value="ECO:0000250"/>
    <property type="project" value="UniProtKB"/>
</dbReference>
<dbReference type="GO" id="GO:0009063">
    <property type="term" value="P:amino acid catabolic process"/>
    <property type="evidence" value="ECO:0007669"/>
    <property type="project" value="InterPro"/>
</dbReference>
<dbReference type="FunFam" id="3.20.20.120:FF:000011">
    <property type="entry name" value="D-galactonate dehydratase family member VSWAT3_13707"/>
    <property type="match status" value="1"/>
</dbReference>
<dbReference type="Gene3D" id="3.20.20.120">
    <property type="entry name" value="Enolase-like C-terminal domain"/>
    <property type="match status" value="1"/>
</dbReference>
<dbReference type="Gene3D" id="3.30.390.10">
    <property type="entry name" value="Enolase-like, N-terminal domain"/>
    <property type="match status" value="1"/>
</dbReference>
<dbReference type="InterPro" id="IPR034593">
    <property type="entry name" value="DgoD-like"/>
</dbReference>
<dbReference type="InterPro" id="IPR036849">
    <property type="entry name" value="Enolase-like_C_sf"/>
</dbReference>
<dbReference type="InterPro" id="IPR029017">
    <property type="entry name" value="Enolase-like_N"/>
</dbReference>
<dbReference type="InterPro" id="IPR029065">
    <property type="entry name" value="Enolase_C-like"/>
</dbReference>
<dbReference type="InterPro" id="IPR018110">
    <property type="entry name" value="Mandel_Rmase/mucon_lact_enz_CS"/>
</dbReference>
<dbReference type="InterPro" id="IPR013342">
    <property type="entry name" value="Mandelate_racemase_C"/>
</dbReference>
<dbReference type="InterPro" id="IPR013341">
    <property type="entry name" value="Mandelate_racemase_N_dom"/>
</dbReference>
<dbReference type="PANTHER" id="PTHR48080">
    <property type="entry name" value="D-GALACTONATE DEHYDRATASE-RELATED"/>
    <property type="match status" value="1"/>
</dbReference>
<dbReference type="PANTHER" id="PTHR48080:SF6">
    <property type="entry name" value="STARVATION-SENSING PROTEIN RSPA"/>
    <property type="match status" value="1"/>
</dbReference>
<dbReference type="Pfam" id="PF13378">
    <property type="entry name" value="MR_MLE_C"/>
    <property type="match status" value="1"/>
</dbReference>
<dbReference type="Pfam" id="PF02746">
    <property type="entry name" value="MR_MLE_N"/>
    <property type="match status" value="1"/>
</dbReference>
<dbReference type="SMART" id="SM00922">
    <property type="entry name" value="MR_MLE"/>
    <property type="match status" value="1"/>
</dbReference>
<dbReference type="SUPFAM" id="SSF51604">
    <property type="entry name" value="Enolase C-terminal domain-like"/>
    <property type="match status" value="1"/>
</dbReference>
<dbReference type="SUPFAM" id="SSF54826">
    <property type="entry name" value="Enolase N-terminal domain-like"/>
    <property type="match status" value="1"/>
</dbReference>
<dbReference type="PROSITE" id="PS00908">
    <property type="entry name" value="MR_MLE_1"/>
    <property type="match status" value="1"/>
</dbReference>
<name>IMND2_ENTGE</name>
<sequence>MMKALVIEDIKVITTAPEGINLVAVKVTTNDPSIYGVGCATFTQRYEVVVTAIDKYLKPFLIGKDPQRIEDIWRTASVSSYWRNGPVLNNALSGIDMALWDIKGKLANMPLYQLFGGKVRDAVPAYIHADAQSVSDAVELVQTRVDQGWKQIRVQIGGYGGNNQAMHLPKDNTPGVYYDPDVYMKTMIEGFEKLREKFGDSIKLCHDVHERLSPSEAVKFANQLEKFDLLFLEDALPPEQVQWFEHLRSHTNIPLAMGELFNNPHEWTGLIQNRTIDYLRLHLSQVGGITPTRKIISLADAYGVRTAWHGPGDMTGIGHAVNTHLSITSTNFGIQEWSCSIKENTYKVFPGTPVAKDGYIYLNDQPGIGVDIDEEAAAAFPTHDRMADWTLCRLPDGSAGRP</sequence>
<comment type="function">
    <text evidence="2">Has no detectable activity with D-mannonate and with a panel of 70 other acid sugars (in vitro), in spite of the conservation of the residues that are expected to be important for catalytic activity and cofactor binding. May have evolved a divergent function.</text>
</comment>
<comment type="similarity">
    <text evidence="3">Belongs to the mandelate racemase/muconate lactonizing enzyme family. GalD subfamily.</text>
</comment>
<accession>C9A1P5</accession>